<name>CENPX_PONAB</name>
<dbReference type="EMBL" id="CR858542">
    <property type="protein sequence ID" value="CAH90769.1"/>
    <property type="molecule type" value="mRNA"/>
</dbReference>
<dbReference type="RefSeq" id="NP_001125431.1">
    <property type="nucleotide sequence ID" value="NM_001131959.1"/>
</dbReference>
<dbReference type="SMR" id="Q5RBU1"/>
<dbReference type="FunCoup" id="Q5RBU1">
    <property type="interactions" value="534"/>
</dbReference>
<dbReference type="STRING" id="9601.ENSPPYP00000009834"/>
<dbReference type="Ensembl" id="ENSPPYT00000010225.2">
    <property type="protein sequence ID" value="ENSPPYP00000009834.1"/>
    <property type="gene ID" value="ENSPPYG00000008761.3"/>
</dbReference>
<dbReference type="GeneID" id="100172339"/>
<dbReference type="KEGG" id="pon:100172339"/>
<dbReference type="CTD" id="201254"/>
<dbReference type="eggNOG" id="ENOG502S98G">
    <property type="taxonomic scope" value="Eukaryota"/>
</dbReference>
<dbReference type="GeneTree" id="ENSGT00390000002725"/>
<dbReference type="HOGENOM" id="CLU_175684_0_0_1"/>
<dbReference type="InParanoid" id="Q5RBU1"/>
<dbReference type="OMA" id="FKAKTIQ"/>
<dbReference type="OrthoDB" id="2500381at2759"/>
<dbReference type="TreeFam" id="TF330764"/>
<dbReference type="Proteomes" id="UP000001595">
    <property type="component" value="Chromosome 17"/>
</dbReference>
<dbReference type="GO" id="GO:0000785">
    <property type="term" value="C:chromatin"/>
    <property type="evidence" value="ECO:0007669"/>
    <property type="project" value="Ensembl"/>
</dbReference>
<dbReference type="GO" id="GO:0071821">
    <property type="term" value="C:FANCM-MHF complex"/>
    <property type="evidence" value="ECO:0000250"/>
    <property type="project" value="UniProtKB"/>
</dbReference>
<dbReference type="GO" id="GO:0043240">
    <property type="term" value="C:Fanconi anaemia nuclear complex"/>
    <property type="evidence" value="ECO:0000250"/>
    <property type="project" value="UniProtKB"/>
</dbReference>
<dbReference type="GO" id="GO:0000939">
    <property type="term" value="C:inner kinetochore"/>
    <property type="evidence" value="ECO:0007669"/>
    <property type="project" value="Ensembl"/>
</dbReference>
<dbReference type="GO" id="GO:0003677">
    <property type="term" value="F:DNA binding"/>
    <property type="evidence" value="ECO:0000250"/>
    <property type="project" value="UniProtKB"/>
</dbReference>
<dbReference type="GO" id="GO:0003690">
    <property type="term" value="F:double-stranded DNA binding"/>
    <property type="evidence" value="ECO:0007669"/>
    <property type="project" value="Ensembl"/>
</dbReference>
<dbReference type="GO" id="GO:0051301">
    <property type="term" value="P:cell division"/>
    <property type="evidence" value="ECO:0007669"/>
    <property type="project" value="UniProtKB-KW"/>
</dbReference>
<dbReference type="GO" id="GO:0036297">
    <property type="term" value="P:interstrand cross-link repair"/>
    <property type="evidence" value="ECO:0007669"/>
    <property type="project" value="Ensembl"/>
</dbReference>
<dbReference type="GO" id="GO:0051382">
    <property type="term" value="P:kinetochore assembly"/>
    <property type="evidence" value="ECO:0007669"/>
    <property type="project" value="InterPro"/>
</dbReference>
<dbReference type="GO" id="GO:0031297">
    <property type="term" value="P:replication fork processing"/>
    <property type="evidence" value="ECO:0000250"/>
    <property type="project" value="UniProtKB"/>
</dbReference>
<dbReference type="GO" id="GO:0000712">
    <property type="term" value="P:resolution of meiotic recombination intermediates"/>
    <property type="evidence" value="ECO:0000250"/>
    <property type="project" value="UniProtKB"/>
</dbReference>
<dbReference type="CDD" id="cd22921">
    <property type="entry name" value="HFD_CENP-X"/>
    <property type="match status" value="1"/>
</dbReference>
<dbReference type="FunFam" id="1.20.5.4980:FF:000001">
    <property type="entry name" value="Centromere protein X"/>
    <property type="match status" value="1"/>
</dbReference>
<dbReference type="Gene3D" id="1.20.5.4980">
    <property type="match status" value="1"/>
</dbReference>
<dbReference type="Gene3D" id="6.10.130.30">
    <property type="match status" value="1"/>
</dbReference>
<dbReference type="InterPro" id="IPR018552">
    <property type="entry name" value="CENP-X"/>
</dbReference>
<dbReference type="PANTHER" id="PTHR28680">
    <property type="entry name" value="CENTROMERE PROTEIN X"/>
    <property type="match status" value="1"/>
</dbReference>
<dbReference type="PANTHER" id="PTHR28680:SF1">
    <property type="entry name" value="CENTROMERE PROTEIN X"/>
    <property type="match status" value="1"/>
</dbReference>
<dbReference type="Pfam" id="PF09415">
    <property type="entry name" value="CENP-X"/>
    <property type="match status" value="1"/>
</dbReference>
<protein>
    <recommendedName>
        <fullName>Centromere protein X</fullName>
        <shortName>CENP-X</shortName>
    </recommendedName>
    <alternativeName>
        <fullName>FANCM-interacting histone fold protein 2</fullName>
    </alternativeName>
    <alternativeName>
        <fullName>Fanconi anemia-associated polypeptide of 10 kDa</fullName>
    </alternativeName>
    <alternativeName>
        <fullName>Stimulated by retinoic acid gene 13 protein homolog</fullName>
    </alternativeName>
</protein>
<reference key="1">
    <citation type="submission" date="2004-11" db="EMBL/GenBank/DDBJ databases">
        <authorList>
            <consortium name="The German cDNA consortium"/>
        </authorList>
    </citation>
    <scope>NUCLEOTIDE SEQUENCE [LARGE SCALE MRNA]</scope>
    <source>
        <tissue>Kidney</tissue>
    </source>
</reference>
<proteinExistence type="inferred from homology"/>
<feature type="chain" id="PRO_0000337182" description="Centromere protein X">
    <location>
        <begin position="1"/>
        <end position="81"/>
    </location>
</feature>
<feature type="modified residue" description="N-acetylmethionine" evidence="1">
    <location>
        <position position="1"/>
    </location>
</feature>
<gene>
    <name type="primary">CENPX</name>
    <name type="synonym">FAAP10</name>
    <name type="synonym">MHF2</name>
    <name type="synonym">STRA13</name>
</gene>
<evidence type="ECO:0000250" key="1">
    <source>
        <dbReference type="UniProtKB" id="A8MT69"/>
    </source>
</evidence>
<evidence type="ECO:0000305" key="2"/>
<organism>
    <name type="scientific">Pongo abelii</name>
    <name type="common">Sumatran orangutan</name>
    <name type="synonym">Pongo pygmaeus abelii</name>
    <dbReference type="NCBI Taxonomy" id="9601"/>
    <lineage>
        <taxon>Eukaryota</taxon>
        <taxon>Metazoa</taxon>
        <taxon>Chordata</taxon>
        <taxon>Craniata</taxon>
        <taxon>Vertebrata</taxon>
        <taxon>Euteleostomi</taxon>
        <taxon>Mammalia</taxon>
        <taxon>Eutheria</taxon>
        <taxon>Euarchontoglires</taxon>
        <taxon>Primates</taxon>
        <taxon>Haplorrhini</taxon>
        <taxon>Catarrhini</taxon>
        <taxon>Hominidae</taxon>
        <taxon>Pongo</taxon>
    </lineage>
</organism>
<sequence length="81" mass="8985">MEGPGAGSGFRKELVSRLLHLHFKDDKTKVSGDALQLMVELLKVFVVEAAVRGVRQAQAEDALRVDVDQLEKVLPQLLLDF</sequence>
<accession>Q5RBU1</accession>
<keyword id="KW-0007">Acetylation</keyword>
<keyword id="KW-0131">Cell cycle</keyword>
<keyword id="KW-0132">Cell division</keyword>
<keyword id="KW-0137">Centromere</keyword>
<keyword id="KW-0158">Chromosome</keyword>
<keyword id="KW-0227">DNA damage</keyword>
<keyword id="KW-0234">DNA repair</keyword>
<keyword id="KW-0238">DNA-binding</keyword>
<keyword id="KW-0995">Kinetochore</keyword>
<keyword id="KW-0498">Mitosis</keyword>
<keyword id="KW-0539">Nucleus</keyword>
<keyword id="KW-1185">Reference proteome</keyword>
<comment type="function">
    <text evidence="1">DNA-binding component of the Fanconi anemia (FA) core complex. Required for the normal activation of the FA pathway, leading to monoubiquitination of the FANCI-FANCD2 complex in response to DNA damage, cellular resistance to DNA cross-linking drugs, and prevention of chromosomal breakage. In complex with CENPS (MHF heterodimer), crucial cofactor for FANCM in both binding and ATP-dependent remodeling of DNA. Stabilizes FANCM. In complex with CENPS and FANCM (but not other FANC proteins), rapidly recruited to blocked forks and promotes gene conversion at blocked replication forks. In complex with CENPS, CENPT and CENPW (CENP-T-W-S-X heterotetramer), involved in the formation of a functional kinetochore outer plate, which is essential for kinetochore-microtubule attachment and faithful mitotic progression. As a component of MHF and CENP-T-W-S-X complexes, binds DNA and bends it to form a nucleosome-like structure. DNA-binding function is fulfilled in the presence of CENPS, with the following preference for DNA substates: Holliday junction &gt; double-stranded &gt; splay arm &gt; single-stranded. Does not bind DNA on its own.</text>
</comment>
<comment type="subunit">
    <text evidence="1">Heterodimer with CENPX, sometimes called MHF; this interaction stabilizes both partners. MHF heterodimers can assemble to form tetrameric structures. MHF also coassemble with CENPT-CENPW heterodimers at centromeres to form the tetrameric CENP-T-W-S-X complex. Forms a discrete complex with FANCM and CENPX, called FANCM-MHF; this interaction, probably mediated by direct binding between CENPS and FANCM, leads to synergistic activation of double-stranded DNA binding and strongly stimulates FANCM-mediated DNA remodeling. Recruited by FANCM to the Fanconi anemia (FA) core complex, which consists of CENPS, CENPX, FANCA, FANCB, FANCC, FANCE, FANCF, FANCG, FANCL, FANCM, FAAP24 and FAAP100. The FA core complex associates with Bloom syndrome (BLM) complex, which consists of at least BLM, DNA topoisomerase 3-alpha (TOP3A), RMI1/BLAP75, RPA1/RPA70 and RPA2/RPA32. The super complex between FA and BLM is called BRAFT.</text>
</comment>
<comment type="subcellular location">
    <subcellularLocation>
        <location evidence="1">Nucleus</location>
    </subcellularLocation>
    <subcellularLocation>
        <location evidence="1">Chromosome</location>
        <location evidence="1">Centromere</location>
    </subcellularLocation>
    <subcellularLocation>
        <location evidence="1">Chromosome</location>
        <location evidence="1">Centromere</location>
        <location evidence="1">Kinetochore</location>
    </subcellularLocation>
    <text evidence="1">Assembly of CENPS and CENPX and its partner subunits CENPT and CENPW at centromeres occurs through a dynamic exchange mechanism. Although exchange is continuous in the cell cycle, de novo assembly starts principally during mid-late S phase and is complete by G2. CENPX being less stably bound at the kinetochore than CENPS.</text>
</comment>
<comment type="similarity">
    <text evidence="2">Belongs to the CENP-X/MHF2 family.</text>
</comment>